<name>RL9_LEVBA</name>
<sequence length="152" mass="17161">MKVIFMKDVRGKGKRGEIKNVPDGYAQNFLIKRGLAKEANQSAMSQLNAERKAEQRREAEELAEAKDLQKRLEDDKTVVEIVAKAGEDSRLFGSIPSKQIVQALDKQYNLKLDKRKVELPEPIRSLGFTNVPVKLHADVTAKIRVHVVAKQQ</sequence>
<comment type="function">
    <text evidence="1">Binds to the 23S rRNA.</text>
</comment>
<comment type="similarity">
    <text evidence="1">Belongs to the bacterial ribosomal protein bL9 family.</text>
</comment>
<proteinExistence type="inferred from homology"/>
<keyword id="KW-1185">Reference proteome</keyword>
<keyword id="KW-0687">Ribonucleoprotein</keyword>
<keyword id="KW-0689">Ribosomal protein</keyword>
<keyword id="KW-0694">RNA-binding</keyword>
<keyword id="KW-0699">rRNA-binding</keyword>
<feature type="chain" id="PRO_1000014795" description="Large ribosomal subunit protein bL9">
    <location>
        <begin position="1"/>
        <end position="152"/>
    </location>
</feature>
<feature type="region of interest" description="Disordered" evidence="2">
    <location>
        <begin position="41"/>
        <end position="61"/>
    </location>
</feature>
<feature type="compositionally biased region" description="Basic and acidic residues" evidence="2">
    <location>
        <begin position="49"/>
        <end position="61"/>
    </location>
</feature>
<gene>
    <name evidence="1" type="primary">rplI</name>
    <name type="ordered locus">LVIS_0018</name>
</gene>
<evidence type="ECO:0000255" key="1">
    <source>
        <dbReference type="HAMAP-Rule" id="MF_00503"/>
    </source>
</evidence>
<evidence type="ECO:0000256" key="2">
    <source>
        <dbReference type="SAM" id="MobiDB-lite"/>
    </source>
</evidence>
<evidence type="ECO:0000305" key="3"/>
<dbReference type="EMBL" id="CP000416">
    <property type="protein sequence ID" value="ABJ63195.1"/>
    <property type="molecule type" value="Genomic_DNA"/>
</dbReference>
<dbReference type="RefSeq" id="WP_011666833.1">
    <property type="nucleotide sequence ID" value="NC_008497.1"/>
</dbReference>
<dbReference type="SMR" id="Q03UC7"/>
<dbReference type="STRING" id="387344.LVIS_0018"/>
<dbReference type="GeneID" id="56991803"/>
<dbReference type="KEGG" id="lbr:LVIS_0018"/>
<dbReference type="eggNOG" id="COG0359">
    <property type="taxonomic scope" value="Bacteria"/>
</dbReference>
<dbReference type="HOGENOM" id="CLU_078938_3_2_9"/>
<dbReference type="Proteomes" id="UP000001652">
    <property type="component" value="Chromosome"/>
</dbReference>
<dbReference type="GO" id="GO:1990904">
    <property type="term" value="C:ribonucleoprotein complex"/>
    <property type="evidence" value="ECO:0007669"/>
    <property type="project" value="UniProtKB-KW"/>
</dbReference>
<dbReference type="GO" id="GO:0005840">
    <property type="term" value="C:ribosome"/>
    <property type="evidence" value="ECO:0007669"/>
    <property type="project" value="UniProtKB-KW"/>
</dbReference>
<dbReference type="GO" id="GO:0019843">
    <property type="term" value="F:rRNA binding"/>
    <property type="evidence" value="ECO:0007669"/>
    <property type="project" value="UniProtKB-UniRule"/>
</dbReference>
<dbReference type="GO" id="GO:0003735">
    <property type="term" value="F:structural constituent of ribosome"/>
    <property type="evidence" value="ECO:0007669"/>
    <property type="project" value="InterPro"/>
</dbReference>
<dbReference type="GO" id="GO:0006412">
    <property type="term" value="P:translation"/>
    <property type="evidence" value="ECO:0007669"/>
    <property type="project" value="UniProtKB-UniRule"/>
</dbReference>
<dbReference type="FunFam" id="3.10.430.100:FF:000002">
    <property type="entry name" value="50S ribosomal protein L9"/>
    <property type="match status" value="1"/>
</dbReference>
<dbReference type="FunFam" id="3.40.5.10:FF:000002">
    <property type="entry name" value="50S ribosomal protein L9"/>
    <property type="match status" value="1"/>
</dbReference>
<dbReference type="Gene3D" id="3.10.430.100">
    <property type="entry name" value="Ribosomal protein L9, C-terminal domain"/>
    <property type="match status" value="1"/>
</dbReference>
<dbReference type="Gene3D" id="3.40.5.10">
    <property type="entry name" value="Ribosomal protein L9, N-terminal domain"/>
    <property type="match status" value="1"/>
</dbReference>
<dbReference type="HAMAP" id="MF_00503">
    <property type="entry name" value="Ribosomal_bL9"/>
    <property type="match status" value="1"/>
</dbReference>
<dbReference type="InterPro" id="IPR000244">
    <property type="entry name" value="Ribosomal_bL9"/>
</dbReference>
<dbReference type="InterPro" id="IPR009027">
    <property type="entry name" value="Ribosomal_bL9/RNase_H1_N"/>
</dbReference>
<dbReference type="InterPro" id="IPR020594">
    <property type="entry name" value="Ribosomal_bL9_bac/chp"/>
</dbReference>
<dbReference type="InterPro" id="IPR020069">
    <property type="entry name" value="Ribosomal_bL9_C"/>
</dbReference>
<dbReference type="InterPro" id="IPR036791">
    <property type="entry name" value="Ribosomal_bL9_C_sf"/>
</dbReference>
<dbReference type="InterPro" id="IPR020070">
    <property type="entry name" value="Ribosomal_bL9_N"/>
</dbReference>
<dbReference type="InterPro" id="IPR036935">
    <property type="entry name" value="Ribosomal_bL9_N_sf"/>
</dbReference>
<dbReference type="NCBIfam" id="TIGR00158">
    <property type="entry name" value="L9"/>
    <property type="match status" value="1"/>
</dbReference>
<dbReference type="PANTHER" id="PTHR21368">
    <property type="entry name" value="50S RIBOSOMAL PROTEIN L9"/>
    <property type="match status" value="1"/>
</dbReference>
<dbReference type="Pfam" id="PF03948">
    <property type="entry name" value="Ribosomal_L9_C"/>
    <property type="match status" value="1"/>
</dbReference>
<dbReference type="Pfam" id="PF01281">
    <property type="entry name" value="Ribosomal_L9_N"/>
    <property type="match status" value="1"/>
</dbReference>
<dbReference type="SUPFAM" id="SSF55658">
    <property type="entry name" value="L9 N-domain-like"/>
    <property type="match status" value="1"/>
</dbReference>
<dbReference type="SUPFAM" id="SSF55653">
    <property type="entry name" value="Ribosomal protein L9 C-domain"/>
    <property type="match status" value="1"/>
</dbReference>
<dbReference type="PROSITE" id="PS00651">
    <property type="entry name" value="RIBOSOMAL_L9"/>
    <property type="match status" value="1"/>
</dbReference>
<reference key="1">
    <citation type="journal article" date="2006" name="Proc. Natl. Acad. Sci. U.S.A.">
        <title>Comparative genomics of the lactic acid bacteria.</title>
        <authorList>
            <person name="Makarova K.S."/>
            <person name="Slesarev A."/>
            <person name="Wolf Y.I."/>
            <person name="Sorokin A."/>
            <person name="Mirkin B."/>
            <person name="Koonin E.V."/>
            <person name="Pavlov A."/>
            <person name="Pavlova N."/>
            <person name="Karamychev V."/>
            <person name="Polouchine N."/>
            <person name="Shakhova V."/>
            <person name="Grigoriev I."/>
            <person name="Lou Y."/>
            <person name="Rohksar D."/>
            <person name="Lucas S."/>
            <person name="Huang K."/>
            <person name="Goodstein D.M."/>
            <person name="Hawkins T."/>
            <person name="Plengvidhya V."/>
            <person name="Welker D."/>
            <person name="Hughes J."/>
            <person name="Goh Y."/>
            <person name="Benson A."/>
            <person name="Baldwin K."/>
            <person name="Lee J.-H."/>
            <person name="Diaz-Muniz I."/>
            <person name="Dosti B."/>
            <person name="Smeianov V."/>
            <person name="Wechter W."/>
            <person name="Barabote R."/>
            <person name="Lorca G."/>
            <person name="Altermann E."/>
            <person name="Barrangou R."/>
            <person name="Ganesan B."/>
            <person name="Xie Y."/>
            <person name="Rawsthorne H."/>
            <person name="Tamir D."/>
            <person name="Parker C."/>
            <person name="Breidt F."/>
            <person name="Broadbent J.R."/>
            <person name="Hutkins R."/>
            <person name="O'Sullivan D."/>
            <person name="Steele J."/>
            <person name="Unlu G."/>
            <person name="Saier M.H. Jr."/>
            <person name="Klaenhammer T."/>
            <person name="Richardson P."/>
            <person name="Kozyavkin S."/>
            <person name="Weimer B.C."/>
            <person name="Mills D.A."/>
        </authorList>
    </citation>
    <scope>NUCLEOTIDE SEQUENCE [LARGE SCALE GENOMIC DNA]</scope>
    <source>
        <strain>ATCC 367 / BCRC 12310 / CIP 105137 / JCM 1170 / LMG 11437 / NCIMB 947 / NCTC 947</strain>
    </source>
</reference>
<organism>
    <name type="scientific">Levilactobacillus brevis (strain ATCC 367 / BCRC 12310 / CIP 105137 / JCM 1170 / LMG 11437 / NCIMB 947 / NCTC 947)</name>
    <name type="common">Lactobacillus brevis</name>
    <dbReference type="NCBI Taxonomy" id="387344"/>
    <lineage>
        <taxon>Bacteria</taxon>
        <taxon>Bacillati</taxon>
        <taxon>Bacillota</taxon>
        <taxon>Bacilli</taxon>
        <taxon>Lactobacillales</taxon>
        <taxon>Lactobacillaceae</taxon>
        <taxon>Levilactobacillus</taxon>
    </lineage>
</organism>
<accession>Q03UC7</accession>
<protein>
    <recommendedName>
        <fullName evidence="1">Large ribosomal subunit protein bL9</fullName>
    </recommendedName>
    <alternativeName>
        <fullName evidence="3">50S ribosomal protein L9</fullName>
    </alternativeName>
</protein>